<dbReference type="EMBL" id="CP000269">
    <property type="protein sequence ID" value="ABR88959.1"/>
    <property type="molecule type" value="Genomic_DNA"/>
</dbReference>
<dbReference type="RefSeq" id="WP_012078160.1">
    <property type="nucleotide sequence ID" value="NC_009659.1"/>
</dbReference>
<dbReference type="SMR" id="A6SUN8"/>
<dbReference type="STRING" id="375286.mma_0295"/>
<dbReference type="KEGG" id="mms:mma_0295"/>
<dbReference type="eggNOG" id="COG0103">
    <property type="taxonomic scope" value="Bacteria"/>
</dbReference>
<dbReference type="HOGENOM" id="CLU_046483_2_1_4"/>
<dbReference type="OrthoDB" id="9803965at2"/>
<dbReference type="Proteomes" id="UP000006388">
    <property type="component" value="Chromosome"/>
</dbReference>
<dbReference type="GO" id="GO:0022627">
    <property type="term" value="C:cytosolic small ribosomal subunit"/>
    <property type="evidence" value="ECO:0007669"/>
    <property type="project" value="TreeGrafter"/>
</dbReference>
<dbReference type="GO" id="GO:0003723">
    <property type="term" value="F:RNA binding"/>
    <property type="evidence" value="ECO:0007669"/>
    <property type="project" value="TreeGrafter"/>
</dbReference>
<dbReference type="GO" id="GO:0003735">
    <property type="term" value="F:structural constituent of ribosome"/>
    <property type="evidence" value="ECO:0007669"/>
    <property type="project" value="InterPro"/>
</dbReference>
<dbReference type="GO" id="GO:0006412">
    <property type="term" value="P:translation"/>
    <property type="evidence" value="ECO:0007669"/>
    <property type="project" value="UniProtKB-UniRule"/>
</dbReference>
<dbReference type="FunFam" id="3.30.230.10:FF:000001">
    <property type="entry name" value="30S ribosomal protein S9"/>
    <property type="match status" value="1"/>
</dbReference>
<dbReference type="Gene3D" id="3.30.230.10">
    <property type="match status" value="1"/>
</dbReference>
<dbReference type="HAMAP" id="MF_00532_B">
    <property type="entry name" value="Ribosomal_uS9_B"/>
    <property type="match status" value="1"/>
</dbReference>
<dbReference type="InterPro" id="IPR020568">
    <property type="entry name" value="Ribosomal_Su5_D2-typ_SF"/>
</dbReference>
<dbReference type="InterPro" id="IPR000754">
    <property type="entry name" value="Ribosomal_uS9"/>
</dbReference>
<dbReference type="InterPro" id="IPR023035">
    <property type="entry name" value="Ribosomal_uS9_bac/plastid"/>
</dbReference>
<dbReference type="InterPro" id="IPR020574">
    <property type="entry name" value="Ribosomal_uS9_CS"/>
</dbReference>
<dbReference type="InterPro" id="IPR014721">
    <property type="entry name" value="Ribsml_uS5_D2-typ_fold_subgr"/>
</dbReference>
<dbReference type="NCBIfam" id="NF001099">
    <property type="entry name" value="PRK00132.1"/>
    <property type="match status" value="1"/>
</dbReference>
<dbReference type="PANTHER" id="PTHR21569">
    <property type="entry name" value="RIBOSOMAL PROTEIN S9"/>
    <property type="match status" value="1"/>
</dbReference>
<dbReference type="PANTHER" id="PTHR21569:SF1">
    <property type="entry name" value="SMALL RIBOSOMAL SUBUNIT PROTEIN US9M"/>
    <property type="match status" value="1"/>
</dbReference>
<dbReference type="Pfam" id="PF00380">
    <property type="entry name" value="Ribosomal_S9"/>
    <property type="match status" value="1"/>
</dbReference>
<dbReference type="SUPFAM" id="SSF54211">
    <property type="entry name" value="Ribosomal protein S5 domain 2-like"/>
    <property type="match status" value="1"/>
</dbReference>
<dbReference type="PROSITE" id="PS00360">
    <property type="entry name" value="RIBOSOMAL_S9"/>
    <property type="match status" value="1"/>
</dbReference>
<sequence>MIGNYNYGTGRRKSAVARVFIKSGSGQIVVNGKPANEYFSRETGLMVIRQPLELTNNVETFDIMVNVNGGGESGQAGAVRHGITRALIDYDATLKSELSKAGFVTRDAREVERKKVGLRKARRAKQFSKR</sequence>
<name>RS9_JANMA</name>
<comment type="similarity">
    <text evidence="1">Belongs to the universal ribosomal protein uS9 family.</text>
</comment>
<proteinExistence type="inferred from homology"/>
<gene>
    <name evidence="1" type="primary">rpsI</name>
    <name type="ordered locus">mma_0295</name>
</gene>
<protein>
    <recommendedName>
        <fullName evidence="1">Small ribosomal subunit protein uS9</fullName>
    </recommendedName>
    <alternativeName>
        <fullName evidence="2">30S ribosomal protein S9</fullName>
    </alternativeName>
</protein>
<organism>
    <name type="scientific">Janthinobacterium sp. (strain Marseille)</name>
    <name type="common">Minibacterium massiliensis</name>
    <dbReference type="NCBI Taxonomy" id="375286"/>
    <lineage>
        <taxon>Bacteria</taxon>
        <taxon>Pseudomonadati</taxon>
        <taxon>Pseudomonadota</taxon>
        <taxon>Betaproteobacteria</taxon>
        <taxon>Burkholderiales</taxon>
        <taxon>Oxalobacteraceae</taxon>
        <taxon>Janthinobacterium</taxon>
    </lineage>
</organism>
<keyword id="KW-0687">Ribonucleoprotein</keyword>
<keyword id="KW-0689">Ribosomal protein</keyword>
<accession>A6SUN8</accession>
<feature type="chain" id="PRO_1000051237" description="Small ribosomal subunit protein uS9">
    <location>
        <begin position="1"/>
        <end position="130"/>
    </location>
</feature>
<reference key="1">
    <citation type="journal article" date="2007" name="PLoS Genet.">
        <title>Genome analysis of Minibacterium massiliensis highlights the convergent evolution of water-living bacteria.</title>
        <authorList>
            <person name="Audic S."/>
            <person name="Robert C."/>
            <person name="Campagna B."/>
            <person name="Parinello H."/>
            <person name="Claverie J.-M."/>
            <person name="Raoult D."/>
            <person name="Drancourt M."/>
        </authorList>
    </citation>
    <scope>NUCLEOTIDE SEQUENCE [LARGE SCALE GENOMIC DNA]</scope>
    <source>
        <strain>Marseille</strain>
    </source>
</reference>
<evidence type="ECO:0000255" key="1">
    <source>
        <dbReference type="HAMAP-Rule" id="MF_00532"/>
    </source>
</evidence>
<evidence type="ECO:0000305" key="2"/>